<organism>
    <name type="scientific">Salmonella arizonae (strain ATCC BAA-731 / CDC346-86 / RSK2980)</name>
    <dbReference type="NCBI Taxonomy" id="41514"/>
    <lineage>
        <taxon>Bacteria</taxon>
        <taxon>Pseudomonadati</taxon>
        <taxon>Pseudomonadota</taxon>
        <taxon>Gammaproteobacteria</taxon>
        <taxon>Enterobacterales</taxon>
        <taxon>Enterobacteriaceae</taxon>
        <taxon>Salmonella</taxon>
    </lineage>
</organism>
<proteinExistence type="inferred from homology"/>
<comment type="catalytic activity">
    <reaction evidence="1">
        <text>tRNA(Arg) + L-arginine + ATP = L-arginyl-tRNA(Arg) + AMP + diphosphate</text>
        <dbReference type="Rhea" id="RHEA:20301"/>
        <dbReference type="Rhea" id="RHEA-COMP:9658"/>
        <dbReference type="Rhea" id="RHEA-COMP:9673"/>
        <dbReference type="ChEBI" id="CHEBI:30616"/>
        <dbReference type="ChEBI" id="CHEBI:32682"/>
        <dbReference type="ChEBI" id="CHEBI:33019"/>
        <dbReference type="ChEBI" id="CHEBI:78442"/>
        <dbReference type="ChEBI" id="CHEBI:78513"/>
        <dbReference type="ChEBI" id="CHEBI:456215"/>
        <dbReference type="EC" id="6.1.1.19"/>
    </reaction>
</comment>
<comment type="subunit">
    <text evidence="1">Monomer.</text>
</comment>
<comment type="subcellular location">
    <subcellularLocation>
        <location evidence="1">Cytoplasm</location>
    </subcellularLocation>
</comment>
<comment type="similarity">
    <text evidence="1">Belongs to the class-I aminoacyl-tRNA synthetase family.</text>
</comment>
<reference key="1">
    <citation type="submission" date="2007-11" db="EMBL/GenBank/DDBJ databases">
        <authorList>
            <consortium name="The Salmonella enterica serovar Arizonae Genome Sequencing Project"/>
            <person name="McClelland M."/>
            <person name="Sanderson E.K."/>
            <person name="Porwollik S."/>
            <person name="Spieth J."/>
            <person name="Clifton W.S."/>
            <person name="Fulton R."/>
            <person name="Chunyan W."/>
            <person name="Wollam A."/>
            <person name="Shah N."/>
            <person name="Pepin K."/>
            <person name="Bhonagiri V."/>
            <person name="Nash W."/>
            <person name="Johnson M."/>
            <person name="Thiruvilangam P."/>
            <person name="Wilson R."/>
        </authorList>
    </citation>
    <scope>NUCLEOTIDE SEQUENCE [LARGE SCALE GENOMIC DNA]</scope>
    <source>
        <strain>ATCC BAA-731 / CDC346-86 / RSK2980</strain>
    </source>
</reference>
<dbReference type="EC" id="6.1.1.19" evidence="1"/>
<dbReference type="EMBL" id="CP000880">
    <property type="protein sequence ID" value="ABX20947.1"/>
    <property type="molecule type" value="Genomic_DNA"/>
</dbReference>
<dbReference type="SMR" id="A9MNC4"/>
<dbReference type="STRING" id="41514.SARI_01039"/>
<dbReference type="KEGG" id="ses:SARI_01039"/>
<dbReference type="HOGENOM" id="CLU_006406_5_1_6"/>
<dbReference type="Proteomes" id="UP000002084">
    <property type="component" value="Chromosome"/>
</dbReference>
<dbReference type="GO" id="GO:0005737">
    <property type="term" value="C:cytoplasm"/>
    <property type="evidence" value="ECO:0007669"/>
    <property type="project" value="UniProtKB-SubCell"/>
</dbReference>
<dbReference type="GO" id="GO:0004814">
    <property type="term" value="F:arginine-tRNA ligase activity"/>
    <property type="evidence" value="ECO:0007669"/>
    <property type="project" value="UniProtKB-UniRule"/>
</dbReference>
<dbReference type="GO" id="GO:0005524">
    <property type="term" value="F:ATP binding"/>
    <property type="evidence" value="ECO:0007669"/>
    <property type="project" value="UniProtKB-UniRule"/>
</dbReference>
<dbReference type="GO" id="GO:0006420">
    <property type="term" value="P:arginyl-tRNA aminoacylation"/>
    <property type="evidence" value="ECO:0007669"/>
    <property type="project" value="UniProtKB-UniRule"/>
</dbReference>
<dbReference type="CDD" id="cd07956">
    <property type="entry name" value="Anticodon_Ia_Arg"/>
    <property type="match status" value="1"/>
</dbReference>
<dbReference type="CDD" id="cd00671">
    <property type="entry name" value="ArgRS_core"/>
    <property type="match status" value="1"/>
</dbReference>
<dbReference type="FunFam" id="1.10.730.10:FF:000001">
    <property type="entry name" value="Arginine--tRNA ligase"/>
    <property type="match status" value="1"/>
</dbReference>
<dbReference type="FunFam" id="3.30.1360.70:FF:000001">
    <property type="entry name" value="Arginine--tRNA ligase"/>
    <property type="match status" value="1"/>
</dbReference>
<dbReference type="FunFam" id="3.40.50.620:FF:000030">
    <property type="entry name" value="Arginine--tRNA ligase"/>
    <property type="match status" value="1"/>
</dbReference>
<dbReference type="Gene3D" id="3.30.1360.70">
    <property type="entry name" value="Arginyl tRNA synthetase N-terminal domain"/>
    <property type="match status" value="1"/>
</dbReference>
<dbReference type="Gene3D" id="3.40.50.620">
    <property type="entry name" value="HUPs"/>
    <property type="match status" value="1"/>
</dbReference>
<dbReference type="Gene3D" id="1.10.730.10">
    <property type="entry name" value="Isoleucyl-tRNA Synthetase, Domain 1"/>
    <property type="match status" value="1"/>
</dbReference>
<dbReference type="HAMAP" id="MF_00123">
    <property type="entry name" value="Arg_tRNA_synth"/>
    <property type="match status" value="1"/>
</dbReference>
<dbReference type="InterPro" id="IPR001412">
    <property type="entry name" value="aa-tRNA-synth_I_CS"/>
</dbReference>
<dbReference type="InterPro" id="IPR001278">
    <property type="entry name" value="Arg-tRNA-ligase"/>
</dbReference>
<dbReference type="InterPro" id="IPR005148">
    <property type="entry name" value="Arg-tRNA-synth_N"/>
</dbReference>
<dbReference type="InterPro" id="IPR036695">
    <property type="entry name" value="Arg-tRNA-synth_N_sf"/>
</dbReference>
<dbReference type="InterPro" id="IPR035684">
    <property type="entry name" value="ArgRS_core"/>
</dbReference>
<dbReference type="InterPro" id="IPR008909">
    <property type="entry name" value="DALR_anticod-bd"/>
</dbReference>
<dbReference type="InterPro" id="IPR014729">
    <property type="entry name" value="Rossmann-like_a/b/a_fold"/>
</dbReference>
<dbReference type="InterPro" id="IPR009080">
    <property type="entry name" value="tRNAsynth_Ia_anticodon-bd"/>
</dbReference>
<dbReference type="NCBIfam" id="TIGR00456">
    <property type="entry name" value="argS"/>
    <property type="match status" value="1"/>
</dbReference>
<dbReference type="PANTHER" id="PTHR11956:SF5">
    <property type="entry name" value="ARGININE--TRNA LIGASE, CYTOPLASMIC"/>
    <property type="match status" value="1"/>
</dbReference>
<dbReference type="PANTHER" id="PTHR11956">
    <property type="entry name" value="ARGINYL-TRNA SYNTHETASE"/>
    <property type="match status" value="1"/>
</dbReference>
<dbReference type="Pfam" id="PF03485">
    <property type="entry name" value="Arg_tRNA_synt_N"/>
    <property type="match status" value="1"/>
</dbReference>
<dbReference type="Pfam" id="PF05746">
    <property type="entry name" value="DALR_1"/>
    <property type="match status" value="1"/>
</dbReference>
<dbReference type="Pfam" id="PF00750">
    <property type="entry name" value="tRNA-synt_1d"/>
    <property type="match status" value="1"/>
</dbReference>
<dbReference type="PRINTS" id="PR01038">
    <property type="entry name" value="TRNASYNTHARG"/>
</dbReference>
<dbReference type="SMART" id="SM01016">
    <property type="entry name" value="Arg_tRNA_synt_N"/>
    <property type="match status" value="1"/>
</dbReference>
<dbReference type="SMART" id="SM00836">
    <property type="entry name" value="DALR_1"/>
    <property type="match status" value="1"/>
</dbReference>
<dbReference type="SUPFAM" id="SSF47323">
    <property type="entry name" value="Anticodon-binding domain of a subclass of class I aminoacyl-tRNA synthetases"/>
    <property type="match status" value="1"/>
</dbReference>
<dbReference type="SUPFAM" id="SSF55190">
    <property type="entry name" value="Arginyl-tRNA synthetase (ArgRS), N-terminal 'additional' domain"/>
    <property type="match status" value="1"/>
</dbReference>
<dbReference type="SUPFAM" id="SSF52374">
    <property type="entry name" value="Nucleotidylyl transferase"/>
    <property type="match status" value="1"/>
</dbReference>
<dbReference type="PROSITE" id="PS00178">
    <property type="entry name" value="AA_TRNA_LIGASE_I"/>
    <property type="match status" value="1"/>
</dbReference>
<accession>A9MNC4</accession>
<name>SYR_SALAR</name>
<protein>
    <recommendedName>
        <fullName evidence="1">Arginine--tRNA ligase</fullName>
        <ecNumber evidence="1">6.1.1.19</ecNumber>
    </recommendedName>
    <alternativeName>
        <fullName evidence="1">Arginyl-tRNA synthetase</fullName>
        <shortName evidence="1">ArgRS</shortName>
    </alternativeName>
</protein>
<sequence length="577" mass="64202">MNIQALLSEKVSQAMIAAGAPADCEPQVRQSAKVQFGDYQANGMMAVAKKLGMAPRQLAEQVLTHLDLSGIASKVEIAGPGFINIFLDPAFLAEQVQQALASDRLGVSQPARQTIVVDYSAPNVAKEMHVGHLRSTIIGDAAVRTLEFLGHHVIRANHVGDWGTQFGMLIAWLEKQQQENAGEMALADLEGFYRDAKKHYDEDEGFAERARNYVVKLQSGDAYFREMWRKLVDITMTQNQITYDRLNVTLTRDDVMGESLYNPMLPGIVADLKAKGLAVESEGATVVFLDEFKNKEGDPMGVIIQKKDGGYLYTTTDIACAKYRYETLHADRVLYYIDSRQHQHLMQAWTIVRKAGYVPDSVPLEHHMFGMMLGKDGKPFKTRAGGTVKLADLLDEALERARRLVAEKNPDMPADELEKLANAVGIGAVKYADLSKNRTTDYIFDWDNMLAFEGNTAPYMQYAYTRVLSVFRKADIDEQALASAPVIISEDREAQLAARLLQFEETLTVVAREGTPHVMCAYLYDVAGLFSGFYEHCPILSAENDAVRNSRLKLAQLTAKTLKLGLDTLGIETVERM</sequence>
<gene>
    <name evidence="1" type="primary">argS</name>
    <name type="ordered locus">SARI_01039</name>
</gene>
<feature type="chain" id="PRO_1000076227" description="Arginine--tRNA ligase">
    <location>
        <begin position="1"/>
        <end position="577"/>
    </location>
</feature>
<feature type="short sequence motif" description="'HIGH' region">
    <location>
        <begin position="122"/>
        <end position="132"/>
    </location>
</feature>
<keyword id="KW-0030">Aminoacyl-tRNA synthetase</keyword>
<keyword id="KW-0067">ATP-binding</keyword>
<keyword id="KW-0963">Cytoplasm</keyword>
<keyword id="KW-0436">Ligase</keyword>
<keyword id="KW-0547">Nucleotide-binding</keyword>
<keyword id="KW-0648">Protein biosynthesis</keyword>
<keyword id="KW-1185">Reference proteome</keyword>
<evidence type="ECO:0000255" key="1">
    <source>
        <dbReference type="HAMAP-Rule" id="MF_00123"/>
    </source>
</evidence>